<evidence type="ECO:0000250" key="1"/>
<evidence type="ECO:0000250" key="2">
    <source>
        <dbReference type="UniProtKB" id="P50213"/>
    </source>
</evidence>
<evidence type="ECO:0000269" key="3">
    <source>
    </source>
</evidence>
<evidence type="ECO:0000269" key="4">
    <source>
    </source>
</evidence>
<evidence type="ECO:0000305" key="5"/>
<evidence type="ECO:0007829" key="6">
    <source>
        <dbReference type="PDB" id="3BLV"/>
    </source>
</evidence>
<evidence type="ECO:0007829" key="7">
    <source>
        <dbReference type="PDB" id="3BLX"/>
    </source>
</evidence>
<protein>
    <recommendedName>
        <fullName>Isocitrate dehydrogenase [NAD] subunit 1, mitochondrial</fullName>
        <ecNumber>1.1.1.41</ecNumber>
    </recommendedName>
    <alternativeName>
        <fullName>Isocitric dehydrogenase</fullName>
    </alternativeName>
    <alternativeName>
        <fullName>NAD(+)-specific ICDH</fullName>
    </alternativeName>
</protein>
<keyword id="KW-0002">3D-structure</keyword>
<keyword id="KW-0021">Allosteric enzyme</keyword>
<keyword id="KW-0903">Direct protein sequencing</keyword>
<keyword id="KW-0460">Magnesium</keyword>
<keyword id="KW-0464">Manganese</keyword>
<keyword id="KW-0479">Metal-binding</keyword>
<keyword id="KW-0496">Mitochondrion</keyword>
<keyword id="KW-0520">NAD</keyword>
<keyword id="KW-0560">Oxidoreductase</keyword>
<keyword id="KW-1185">Reference proteome</keyword>
<keyword id="KW-0694">RNA-binding</keyword>
<keyword id="KW-0809">Transit peptide</keyword>
<keyword id="KW-0816">Tricarboxylic acid cycle</keyword>
<organism>
    <name type="scientific">Saccharomyces cerevisiae (strain ATCC 204508 / S288c)</name>
    <name type="common">Baker's yeast</name>
    <dbReference type="NCBI Taxonomy" id="559292"/>
    <lineage>
        <taxon>Eukaryota</taxon>
        <taxon>Fungi</taxon>
        <taxon>Dikarya</taxon>
        <taxon>Ascomycota</taxon>
        <taxon>Saccharomycotina</taxon>
        <taxon>Saccharomycetes</taxon>
        <taxon>Saccharomycetales</taxon>
        <taxon>Saccharomycetaceae</taxon>
        <taxon>Saccharomyces</taxon>
    </lineage>
</organism>
<feature type="transit peptide" description="Mitochondrion" evidence="4">
    <location>
        <begin position="1"/>
        <end position="11"/>
    </location>
</feature>
<feature type="chain" id="PRO_0000014431" description="Isocitrate dehydrogenase [NAD] subunit 1, mitochondrial">
    <location>
        <begin position="12"/>
        <end position="360"/>
    </location>
</feature>
<feature type="binding site" evidence="1">
    <location>
        <position position="109"/>
    </location>
    <ligand>
        <name>substrate</name>
    </ligand>
</feature>
<feature type="binding site" evidence="1">
    <location>
        <position position="140"/>
    </location>
    <ligand>
        <name>substrate</name>
    </ligand>
</feature>
<feature type="binding site" evidence="2">
    <location>
        <position position="228"/>
    </location>
    <ligand>
        <name>Mg(2+)</name>
        <dbReference type="ChEBI" id="CHEBI:18420"/>
    </ligand>
</feature>
<feature type="binding site" evidence="1">
    <location>
        <position position="228"/>
    </location>
    <ligand>
        <name>substrate</name>
    </ligand>
</feature>
<feature type="site" description="Critical for catalysis" evidence="1">
    <location>
        <position position="194"/>
    </location>
</feature>
<feature type="strand" evidence="7">
    <location>
        <begin position="29"/>
        <end position="37"/>
    </location>
</feature>
<feature type="helix" evidence="7">
    <location>
        <begin position="38"/>
        <end position="53"/>
    </location>
</feature>
<feature type="strand" evidence="7">
    <location>
        <begin position="57"/>
        <end position="62"/>
    </location>
</feature>
<feature type="helix" evidence="7">
    <location>
        <begin position="71"/>
        <end position="84"/>
    </location>
</feature>
<feature type="strand" evidence="7">
    <location>
        <begin position="85"/>
        <end position="91"/>
    </location>
</feature>
<feature type="helix" evidence="7">
    <location>
        <begin position="95"/>
        <end position="99"/>
    </location>
</feature>
<feature type="helix" evidence="7">
    <location>
        <begin position="102"/>
        <end position="110"/>
    </location>
</feature>
<feature type="strand" evidence="7">
    <location>
        <begin position="114"/>
        <end position="122"/>
    </location>
</feature>
<feature type="strand" evidence="7">
    <location>
        <begin position="135"/>
        <end position="141"/>
    </location>
</feature>
<feature type="helix" evidence="7">
    <location>
        <begin position="145"/>
        <end position="148"/>
    </location>
</feature>
<feature type="strand" evidence="7">
    <location>
        <begin position="150"/>
        <end position="153"/>
    </location>
</feature>
<feature type="strand" evidence="7">
    <location>
        <begin position="158"/>
        <end position="166"/>
    </location>
</feature>
<feature type="helix" evidence="7">
    <location>
        <begin position="167"/>
        <end position="183"/>
    </location>
</feature>
<feature type="strand" evidence="7">
    <location>
        <begin position="188"/>
        <end position="193"/>
    </location>
</feature>
<feature type="turn" evidence="7">
    <location>
        <begin position="195"/>
        <end position="197"/>
    </location>
</feature>
<feature type="helix" evidence="7">
    <location>
        <begin position="201"/>
        <end position="216"/>
    </location>
</feature>
<feature type="strand" evidence="7">
    <location>
        <begin position="220"/>
        <end position="226"/>
    </location>
</feature>
<feature type="helix" evidence="7">
    <location>
        <begin position="227"/>
        <end position="236"/>
    </location>
</feature>
<feature type="helix" evidence="7">
    <location>
        <begin position="238"/>
        <end position="240"/>
    </location>
</feature>
<feature type="strand" evidence="7">
    <location>
        <begin position="242"/>
        <end position="246"/>
    </location>
</feature>
<feature type="helix" evidence="7">
    <location>
        <begin position="248"/>
        <end position="262"/>
    </location>
</feature>
<feature type="helix" evidence="7">
    <location>
        <begin position="265"/>
        <end position="267"/>
    </location>
</feature>
<feature type="strand" evidence="7">
    <location>
        <begin position="269"/>
        <end position="276"/>
    </location>
</feature>
<feature type="strand" evidence="7">
    <location>
        <begin position="278"/>
        <end position="280"/>
    </location>
</feature>
<feature type="turn" evidence="7">
    <location>
        <begin position="283"/>
        <end position="286"/>
    </location>
</feature>
<feature type="helix" evidence="6">
    <location>
        <begin position="289"/>
        <end position="291"/>
    </location>
</feature>
<feature type="helix" evidence="7">
    <location>
        <begin position="300"/>
        <end position="313"/>
    </location>
</feature>
<feature type="helix" evidence="7">
    <location>
        <begin position="317"/>
        <end position="331"/>
    </location>
</feature>
<feature type="strand" evidence="7">
    <location>
        <begin position="332"/>
        <end position="335"/>
    </location>
</feature>
<feature type="helix" evidence="7">
    <location>
        <begin position="338"/>
        <end position="340"/>
    </location>
</feature>
<feature type="helix" evidence="7">
    <location>
        <begin position="346"/>
        <end position="358"/>
    </location>
</feature>
<sequence>MLNRTIAKRTLATAAQAERTLPKKYGGRFTVTLIPGDGVGKEITDSVRTIFEAENIPIDWETINIKQTDHKEGVYEAVESLKRNKIGLKGLWHTPADQTGHGSLNVALRKQLDIYANVALFKSLKGVKTRIPDIDLIVIRENTEGEFSGLEHESVPGVVESLKVMTRPKTERIARFAFDFAKKYNRKSVTAVHKANIMKLGDGLFRNIITEIGQKEYPDIDVSSIIVDNASMQAVAKPHQFDVLVTPSMYGTILGNIGAALIGGPGLVAGANFGRDYAVFEPGSRHVGLDIKGQNVANPTAMILSSTLMLNHLGLNEYATRISKAVHETIAEGKHTTRDIGGSSSTTDFTNEIINKLSTM</sequence>
<reference key="1">
    <citation type="journal article" date="1992" name="J. Biol. Chem.">
        <title>Cloning and characterization of the gene encoding the IDH1 subunit of NAD(+)-dependent isocitrate dehydrogenase from Saccharomyces cerevisiae.</title>
        <authorList>
            <person name="Cupp J.R."/>
            <person name="McAlister-Henn L."/>
        </authorList>
    </citation>
    <scope>NUCLEOTIDE SEQUENCE [GENOMIC DNA]</scope>
    <scope>PROTEIN SEQUENCE OF 49-61; 72-83; 325-333 AND 339-356</scope>
</reference>
<reference key="2">
    <citation type="journal article" date="1997" name="Nature">
        <title>The nucleotide sequence of Saccharomyces cerevisiae chromosome XIV and its evolutionary implications.</title>
        <authorList>
            <person name="Philippsen P."/>
            <person name="Kleine K."/>
            <person name="Poehlmann R."/>
            <person name="Duesterhoeft A."/>
            <person name="Hamberg K."/>
            <person name="Hegemann J.H."/>
            <person name="Obermaier B."/>
            <person name="Urrestarazu L.A."/>
            <person name="Aert R."/>
            <person name="Albermann K."/>
            <person name="Altmann R."/>
            <person name="Andre B."/>
            <person name="Baladron V."/>
            <person name="Ballesta J.P.G."/>
            <person name="Becam A.-M."/>
            <person name="Beinhauer J.D."/>
            <person name="Boskovic J."/>
            <person name="Buitrago M.J."/>
            <person name="Bussereau F."/>
            <person name="Coster F."/>
            <person name="Crouzet M."/>
            <person name="D'Angelo M."/>
            <person name="Dal Pero F."/>
            <person name="De Antoni A."/>
            <person name="del Rey F."/>
            <person name="Doignon F."/>
            <person name="Domdey H."/>
            <person name="Dubois E."/>
            <person name="Fiedler T.A."/>
            <person name="Fleig U."/>
            <person name="Floeth M."/>
            <person name="Fritz C."/>
            <person name="Gaillardin C."/>
            <person name="Garcia-Cantalejo J.M."/>
            <person name="Glansdorff N."/>
            <person name="Goffeau A."/>
            <person name="Gueldener U."/>
            <person name="Herbert C.J."/>
            <person name="Heumann K."/>
            <person name="Heuss-Neitzel D."/>
            <person name="Hilbert H."/>
            <person name="Hinni K."/>
            <person name="Iraqui Houssaini I."/>
            <person name="Jacquet M."/>
            <person name="Jimenez A."/>
            <person name="Jonniaux J.-L."/>
            <person name="Karpfinger-Hartl L."/>
            <person name="Lanfranchi G."/>
            <person name="Lepingle A."/>
            <person name="Levesque H."/>
            <person name="Lyck R."/>
            <person name="Maftahi M."/>
            <person name="Mallet L."/>
            <person name="Maurer C.T.C."/>
            <person name="Messenguy F."/>
            <person name="Mewes H.-W."/>
            <person name="Moestl D."/>
            <person name="Nasr F."/>
            <person name="Nicaud J.-M."/>
            <person name="Niedenthal R.K."/>
            <person name="Pandolfo D."/>
            <person name="Pierard A."/>
            <person name="Piravandi E."/>
            <person name="Planta R.J."/>
            <person name="Pohl T.M."/>
            <person name="Purnelle B."/>
            <person name="Rebischung C."/>
            <person name="Remacha M.A."/>
            <person name="Revuelta J.L."/>
            <person name="Rinke M."/>
            <person name="Saiz J.E."/>
            <person name="Sartorello F."/>
            <person name="Scherens B."/>
            <person name="Sen-Gupta M."/>
            <person name="Soler-Mira A."/>
            <person name="Urbanus J.H.M."/>
            <person name="Valle G."/>
            <person name="Van Dyck L."/>
            <person name="Verhasselt P."/>
            <person name="Vierendeels F."/>
            <person name="Vissers S."/>
            <person name="Voet M."/>
            <person name="Volckaert G."/>
            <person name="Wach A."/>
            <person name="Wambutt R."/>
            <person name="Wedler H."/>
            <person name="Zollner A."/>
            <person name="Hani J."/>
        </authorList>
    </citation>
    <scope>NUCLEOTIDE SEQUENCE [LARGE SCALE GENOMIC DNA]</scope>
    <source>
        <strain>ATCC 204508 / S288c</strain>
    </source>
</reference>
<reference key="3">
    <citation type="journal article" date="2014" name="G3 (Bethesda)">
        <title>The reference genome sequence of Saccharomyces cerevisiae: Then and now.</title>
        <authorList>
            <person name="Engel S.R."/>
            <person name="Dietrich F.S."/>
            <person name="Fisk D.G."/>
            <person name="Binkley G."/>
            <person name="Balakrishnan R."/>
            <person name="Costanzo M.C."/>
            <person name="Dwight S.S."/>
            <person name="Hitz B.C."/>
            <person name="Karra K."/>
            <person name="Nash R.S."/>
            <person name="Weng S."/>
            <person name="Wong E.D."/>
            <person name="Lloyd P."/>
            <person name="Skrzypek M.S."/>
            <person name="Miyasato S.R."/>
            <person name="Simison M."/>
            <person name="Cherry J.M."/>
        </authorList>
    </citation>
    <scope>GENOME REANNOTATION</scope>
    <source>
        <strain>ATCC 204508 / S288c</strain>
    </source>
</reference>
<reference key="4">
    <citation type="journal article" date="1990" name="J. Bacteriol.">
        <title>Subunit structure, expression, and function of NAD(H)-specific isocitrate dehydrogenase in Saccharomyces cerevisiae.</title>
        <authorList>
            <person name="Keys D.A."/>
            <person name="McAlister-Henn L."/>
        </authorList>
    </citation>
    <scope>PROTEIN SEQUENCE OF 12-27</scope>
    <source>
        <strain>SG7</strain>
    </source>
</reference>
<reference key="5">
    <citation type="journal article" date="1993" name="Nucleic Acids Res.">
        <title>Yeast mitochondrial NAD(+)-dependent isocitrate dehydrogenase is an RNA-binding protein.</title>
        <authorList>
            <person name="Elzinga S.D.J."/>
            <person name="Bednarz A.L."/>
            <person name="van Oosterum K."/>
            <person name="Dekker P.J.T."/>
            <person name="Grivell L.A."/>
        </authorList>
    </citation>
    <scope>RNA-BINDING</scope>
</reference>
<reference key="6">
    <citation type="journal article" date="2003" name="Nature">
        <title>Global analysis of protein expression in yeast.</title>
        <authorList>
            <person name="Ghaemmaghami S."/>
            <person name="Huh W.-K."/>
            <person name="Bower K."/>
            <person name="Howson R.W."/>
            <person name="Belle A."/>
            <person name="Dephoure N."/>
            <person name="O'Shea E.K."/>
            <person name="Weissman J.S."/>
        </authorList>
    </citation>
    <scope>LEVEL OF PROTEIN EXPRESSION [LARGE SCALE ANALYSIS]</scope>
</reference>
<gene>
    <name type="primary">IDH1</name>
    <name type="ordered locus">YNL037C</name>
    <name type="ORF">N2690</name>
</gene>
<name>IDH1_YEAST</name>
<accession>P28834</accession>
<accession>D6W1E2</accession>
<comment type="function">
    <text>Performs an essential role in the oxidative function of the citric acid cycle. Also binds RNA; specifically to the 5'-untranslated leaders of mitochondrial mRNAs.</text>
</comment>
<comment type="catalytic activity">
    <reaction>
        <text>D-threo-isocitrate + NAD(+) = 2-oxoglutarate + CO2 + NADH</text>
        <dbReference type="Rhea" id="RHEA:23632"/>
        <dbReference type="ChEBI" id="CHEBI:15562"/>
        <dbReference type="ChEBI" id="CHEBI:16526"/>
        <dbReference type="ChEBI" id="CHEBI:16810"/>
        <dbReference type="ChEBI" id="CHEBI:57540"/>
        <dbReference type="ChEBI" id="CHEBI:57945"/>
        <dbReference type="EC" id="1.1.1.41"/>
    </reaction>
</comment>
<comment type="cofactor">
    <cofactor evidence="1">
        <name>Mg(2+)</name>
        <dbReference type="ChEBI" id="CHEBI:18420"/>
    </cofactor>
    <cofactor evidence="1">
        <name>Mn(2+)</name>
        <dbReference type="ChEBI" id="CHEBI:29035"/>
    </cofactor>
    <text evidence="1">Binds 1 Mg(2+) or Mn(2+) ion per subunit.</text>
</comment>
<comment type="activity regulation">
    <text>Allosterically regulated by several compounds including AMP, NAD(+), and citrate.</text>
</comment>
<comment type="subunit">
    <text>Octamer of two non-identical subunits IDH1 and IDH2.</text>
</comment>
<comment type="interaction">
    <interactant intactId="EBI-8878">
        <id>P28834</id>
    </interactant>
    <interactant intactId="EBI-8883">
        <id>P28241</id>
        <label>IDH2</label>
    </interactant>
    <organismsDiffer>false</organismsDiffer>
    <experiments>7</experiments>
</comment>
<comment type="subcellular location">
    <subcellularLocation>
        <location>Mitochondrion</location>
    </subcellularLocation>
</comment>
<comment type="miscellaneous">
    <text evidence="3">Present with 10500 molecules/cell in log phase SD medium.</text>
</comment>
<comment type="similarity">
    <text evidence="5">Belongs to the isocitrate and isopropylmalate dehydrogenases family.</text>
</comment>
<proteinExistence type="evidence at protein level"/>
<dbReference type="EC" id="1.1.1.41"/>
<dbReference type="EMBL" id="M95203">
    <property type="protein sequence ID" value="AAA34711.1"/>
    <property type="molecule type" value="Genomic_DNA"/>
</dbReference>
<dbReference type="EMBL" id="Z71313">
    <property type="protein sequence ID" value="CAA95904.1"/>
    <property type="molecule type" value="Genomic_DNA"/>
</dbReference>
<dbReference type="EMBL" id="BK006947">
    <property type="protein sequence ID" value="DAA10508.1"/>
    <property type="molecule type" value="Genomic_DNA"/>
</dbReference>
<dbReference type="PIR" id="S31264">
    <property type="entry name" value="S31264"/>
</dbReference>
<dbReference type="RefSeq" id="NP_014361.1">
    <property type="nucleotide sequence ID" value="NM_001182876.1"/>
</dbReference>
<dbReference type="PDB" id="3BLV">
    <property type="method" value="X-ray"/>
    <property type="resolution" value="3.20 A"/>
    <property type="chains" value="A/C/E/G=12-360"/>
</dbReference>
<dbReference type="PDB" id="3BLW">
    <property type="method" value="X-ray"/>
    <property type="resolution" value="4.30 A"/>
    <property type="chains" value="A/C/E/G/I/K/M/O=12-360"/>
</dbReference>
<dbReference type="PDB" id="3BLX">
    <property type="method" value="X-ray"/>
    <property type="resolution" value="2.70 A"/>
    <property type="chains" value="A/C/E/G/I/K/M/O=12-360"/>
</dbReference>
<dbReference type="PDBsum" id="3BLV"/>
<dbReference type="PDBsum" id="3BLW"/>
<dbReference type="PDBsum" id="3BLX"/>
<dbReference type="SMR" id="P28834"/>
<dbReference type="BioGRID" id="35787">
    <property type="interactions" value="314"/>
</dbReference>
<dbReference type="ComplexPortal" id="CPX-558">
    <property type="entry name" value="Mitochondrial isocitrate dehydrogenase complex (NAD+)"/>
</dbReference>
<dbReference type="DIP" id="DIP-4376N"/>
<dbReference type="FunCoup" id="P28834">
    <property type="interactions" value="955"/>
</dbReference>
<dbReference type="IntAct" id="P28834">
    <property type="interactions" value="36"/>
</dbReference>
<dbReference type="MINT" id="P28834"/>
<dbReference type="STRING" id="4932.YNL037C"/>
<dbReference type="MoonProt" id="P28834"/>
<dbReference type="GlyGen" id="P28834">
    <property type="glycosylation" value="1 site, 1 O-linked glycan (1 site)"/>
</dbReference>
<dbReference type="iPTMnet" id="P28834"/>
<dbReference type="PaxDb" id="4932-YNL037C"/>
<dbReference type="PeptideAtlas" id="P28834"/>
<dbReference type="EnsemblFungi" id="YNL037C_mRNA">
    <property type="protein sequence ID" value="YNL037C"/>
    <property type="gene ID" value="YNL037C"/>
</dbReference>
<dbReference type="GeneID" id="855691"/>
<dbReference type="KEGG" id="sce:YNL037C"/>
<dbReference type="AGR" id="SGD:S000004982"/>
<dbReference type="SGD" id="S000004982">
    <property type="gene designation" value="IDH1"/>
</dbReference>
<dbReference type="VEuPathDB" id="FungiDB:YNL037C"/>
<dbReference type="eggNOG" id="KOG0784">
    <property type="taxonomic scope" value="Eukaryota"/>
</dbReference>
<dbReference type="GeneTree" id="ENSGT00950000182989"/>
<dbReference type="HOGENOM" id="CLU_031953_0_0_1"/>
<dbReference type="InParanoid" id="P28834"/>
<dbReference type="OMA" id="TCAHKAN"/>
<dbReference type="OrthoDB" id="10261637at2759"/>
<dbReference type="BioCyc" id="MetaCyc:YNL037C-MONOMER"/>
<dbReference type="BioCyc" id="YEAST:YNL037C-MONOMER"/>
<dbReference type="BRENDA" id="1.1.1.41">
    <property type="organism ID" value="984"/>
</dbReference>
<dbReference type="Reactome" id="R-SCE-71403">
    <property type="pathway name" value="Citric acid cycle (TCA cycle)"/>
</dbReference>
<dbReference type="BioGRID-ORCS" id="855691">
    <property type="hits" value="4 hits in 10 CRISPR screens"/>
</dbReference>
<dbReference type="EvolutionaryTrace" id="P28834"/>
<dbReference type="PRO" id="PR:P28834"/>
<dbReference type="Proteomes" id="UP000002311">
    <property type="component" value="Chromosome XIV"/>
</dbReference>
<dbReference type="RNAct" id="P28834">
    <property type="molecule type" value="protein"/>
</dbReference>
<dbReference type="GO" id="GO:0005829">
    <property type="term" value="C:cytosol"/>
    <property type="evidence" value="ECO:0000304"/>
    <property type="project" value="Reactome"/>
</dbReference>
<dbReference type="GO" id="GO:0045242">
    <property type="term" value="C:isocitrate dehydrogenase complex (NAD+)"/>
    <property type="evidence" value="ECO:0000314"/>
    <property type="project" value="SGD"/>
</dbReference>
<dbReference type="GO" id="GO:0005758">
    <property type="term" value="C:mitochondrial intermembrane space"/>
    <property type="evidence" value="ECO:0000304"/>
    <property type="project" value="Reactome"/>
</dbReference>
<dbReference type="GO" id="GO:0005759">
    <property type="term" value="C:mitochondrial matrix"/>
    <property type="evidence" value="ECO:0000314"/>
    <property type="project" value="SGD"/>
</dbReference>
<dbReference type="GO" id="GO:0042645">
    <property type="term" value="C:mitochondrial nucleoid"/>
    <property type="evidence" value="ECO:0000314"/>
    <property type="project" value="SGD"/>
</dbReference>
<dbReference type="GO" id="GO:0005739">
    <property type="term" value="C:mitochondrion"/>
    <property type="evidence" value="ECO:0000314"/>
    <property type="project" value="ComplexPortal"/>
</dbReference>
<dbReference type="GO" id="GO:0004449">
    <property type="term" value="F:isocitrate dehydrogenase (NAD+) activity"/>
    <property type="evidence" value="ECO:0007669"/>
    <property type="project" value="UniProtKB-EC"/>
</dbReference>
<dbReference type="GO" id="GO:0000287">
    <property type="term" value="F:magnesium ion binding"/>
    <property type="evidence" value="ECO:0007669"/>
    <property type="project" value="InterPro"/>
</dbReference>
<dbReference type="GO" id="GO:0051287">
    <property type="term" value="F:NAD binding"/>
    <property type="evidence" value="ECO:0007669"/>
    <property type="project" value="InterPro"/>
</dbReference>
<dbReference type="GO" id="GO:0003723">
    <property type="term" value="F:RNA binding"/>
    <property type="evidence" value="ECO:0007669"/>
    <property type="project" value="UniProtKB-KW"/>
</dbReference>
<dbReference type="GO" id="GO:0006537">
    <property type="term" value="P:glutamate biosynthetic process"/>
    <property type="evidence" value="ECO:0000304"/>
    <property type="project" value="SGD"/>
</dbReference>
<dbReference type="GO" id="GO:0006102">
    <property type="term" value="P:isocitrate metabolic process"/>
    <property type="evidence" value="ECO:0000314"/>
    <property type="project" value="SGD"/>
</dbReference>
<dbReference type="GO" id="GO:0006099">
    <property type="term" value="P:tricarboxylic acid cycle"/>
    <property type="evidence" value="ECO:0000314"/>
    <property type="project" value="ComplexPortal"/>
</dbReference>
<dbReference type="FunFam" id="3.40.718.10:FF:000001">
    <property type="entry name" value="Isocitrate dehydrogenase [NAD] subunit, mitochondrial"/>
    <property type="match status" value="1"/>
</dbReference>
<dbReference type="Gene3D" id="3.40.718.10">
    <property type="entry name" value="Isopropylmalate Dehydrogenase"/>
    <property type="match status" value="1"/>
</dbReference>
<dbReference type="InterPro" id="IPR019818">
    <property type="entry name" value="IsoCit/isopropylmalate_DH_CS"/>
</dbReference>
<dbReference type="InterPro" id="IPR004434">
    <property type="entry name" value="Isocitrate_DH_NAD"/>
</dbReference>
<dbReference type="InterPro" id="IPR024084">
    <property type="entry name" value="IsoPropMal-DH-like_dom"/>
</dbReference>
<dbReference type="NCBIfam" id="TIGR00175">
    <property type="entry name" value="mito_nad_idh"/>
    <property type="match status" value="1"/>
</dbReference>
<dbReference type="PANTHER" id="PTHR11835">
    <property type="entry name" value="DECARBOXYLATING DEHYDROGENASES-ISOCITRATE, ISOPROPYLMALATE, TARTRATE"/>
    <property type="match status" value="1"/>
</dbReference>
<dbReference type="PANTHER" id="PTHR11835:SF42">
    <property type="entry name" value="ISOCITRATE DEHYDROGENASE [NAD] SUBUNIT BETA, MITOCHONDRIAL"/>
    <property type="match status" value="1"/>
</dbReference>
<dbReference type="Pfam" id="PF00180">
    <property type="entry name" value="Iso_dh"/>
    <property type="match status" value="1"/>
</dbReference>
<dbReference type="SMART" id="SM01329">
    <property type="entry name" value="Iso_dh"/>
    <property type="match status" value="1"/>
</dbReference>
<dbReference type="SUPFAM" id="SSF53659">
    <property type="entry name" value="Isocitrate/Isopropylmalate dehydrogenase-like"/>
    <property type="match status" value="1"/>
</dbReference>
<dbReference type="PROSITE" id="PS00470">
    <property type="entry name" value="IDH_IMDH"/>
    <property type="match status" value="1"/>
</dbReference>